<evidence type="ECO:0000250" key="1"/>
<evidence type="ECO:0000255" key="2"/>
<evidence type="ECO:0000255" key="3">
    <source>
        <dbReference type="PROSITE-ProRule" id="PRU00192"/>
    </source>
</evidence>
<evidence type="ECO:0000256" key="4">
    <source>
        <dbReference type="SAM" id="MobiDB-lite"/>
    </source>
</evidence>
<evidence type="ECO:0000305" key="5"/>
<protein>
    <recommendedName>
        <fullName>High osmolarity signaling protein sho1</fullName>
    </recommendedName>
    <alternativeName>
        <fullName>Osmosensor sho1</fullName>
    </alternativeName>
</protein>
<organism>
    <name type="scientific">Sclerotinia sclerotiorum (strain ATCC 18683 / 1980 / Ss-1)</name>
    <name type="common">White mold</name>
    <name type="synonym">Whetzelinia sclerotiorum</name>
    <dbReference type="NCBI Taxonomy" id="665079"/>
    <lineage>
        <taxon>Eukaryota</taxon>
        <taxon>Fungi</taxon>
        <taxon>Dikarya</taxon>
        <taxon>Ascomycota</taxon>
        <taxon>Pezizomycotina</taxon>
        <taxon>Leotiomycetes</taxon>
        <taxon>Helotiales</taxon>
        <taxon>Sclerotiniaceae</taxon>
        <taxon>Sclerotinia</taxon>
    </lineage>
</organism>
<dbReference type="EMBL" id="CH476638">
    <property type="protein sequence ID" value="EDN95546.1"/>
    <property type="molecule type" value="Genomic_DNA"/>
</dbReference>
<dbReference type="RefSeq" id="XP_001587432.1">
    <property type="nucleotide sequence ID" value="XM_001587382.1"/>
</dbReference>
<dbReference type="SMR" id="A7F1F4"/>
<dbReference type="FunCoup" id="A7F1F4">
    <property type="interactions" value="125"/>
</dbReference>
<dbReference type="STRING" id="665079.A7F1F4"/>
<dbReference type="GlyCosmos" id="A7F1F4">
    <property type="glycosylation" value="1 site, No reported glycans"/>
</dbReference>
<dbReference type="GeneID" id="5483570"/>
<dbReference type="KEGG" id="ssl:SS1G_11424"/>
<dbReference type="VEuPathDB" id="FungiDB:sscle_07g059820"/>
<dbReference type="InParanoid" id="A7F1F4"/>
<dbReference type="OMA" id="NIVWIFY"/>
<dbReference type="OrthoDB" id="5983572at2759"/>
<dbReference type="Proteomes" id="UP000001312">
    <property type="component" value="Unassembled WGS sequence"/>
</dbReference>
<dbReference type="GO" id="GO:0005886">
    <property type="term" value="C:plasma membrane"/>
    <property type="evidence" value="ECO:0007669"/>
    <property type="project" value="UniProtKB-SubCell"/>
</dbReference>
<dbReference type="GO" id="GO:0030833">
    <property type="term" value="P:regulation of actin filament polymerization"/>
    <property type="evidence" value="ECO:0000318"/>
    <property type="project" value="GO_Central"/>
</dbReference>
<dbReference type="CDD" id="cd11855">
    <property type="entry name" value="SH3_Sho1p"/>
    <property type="match status" value="1"/>
</dbReference>
<dbReference type="FunFam" id="2.30.30.40:FF:000213">
    <property type="entry name" value="High osmolarity signaling protein SHO1"/>
    <property type="match status" value="1"/>
</dbReference>
<dbReference type="Gene3D" id="2.30.30.40">
    <property type="entry name" value="SH3 Domains"/>
    <property type="match status" value="1"/>
</dbReference>
<dbReference type="InterPro" id="IPR036028">
    <property type="entry name" value="SH3-like_dom_sf"/>
</dbReference>
<dbReference type="InterPro" id="IPR001452">
    <property type="entry name" value="SH3_domain"/>
</dbReference>
<dbReference type="InterPro" id="IPR035522">
    <property type="entry name" value="Sho1_SH3"/>
</dbReference>
<dbReference type="Pfam" id="PF00018">
    <property type="entry name" value="SH3_1"/>
    <property type="match status" value="1"/>
</dbReference>
<dbReference type="SMART" id="SM00326">
    <property type="entry name" value="SH3"/>
    <property type="match status" value="1"/>
</dbReference>
<dbReference type="SUPFAM" id="SSF50044">
    <property type="entry name" value="SH3-domain"/>
    <property type="match status" value="1"/>
</dbReference>
<dbReference type="PROSITE" id="PS50002">
    <property type="entry name" value="SH3"/>
    <property type="match status" value="1"/>
</dbReference>
<accession>A7F1F4</accession>
<feature type="chain" id="PRO_0000410398" description="High osmolarity signaling protein sho1">
    <location>
        <begin position="1"/>
        <end position="317"/>
    </location>
</feature>
<feature type="topological domain" description="Cytoplasmic" evidence="2">
    <location>
        <begin position="1"/>
        <end position="27"/>
    </location>
</feature>
<feature type="transmembrane region" description="Helical" evidence="2">
    <location>
        <begin position="28"/>
        <end position="48"/>
    </location>
</feature>
<feature type="topological domain" description="Extracellular" evidence="2">
    <location>
        <begin position="49"/>
        <end position="62"/>
    </location>
</feature>
<feature type="transmembrane region" description="Helical" evidence="2">
    <location>
        <begin position="63"/>
        <end position="83"/>
    </location>
</feature>
<feature type="topological domain" description="Cytoplasmic" evidence="2">
    <location>
        <begin position="84"/>
        <end position="92"/>
    </location>
</feature>
<feature type="transmembrane region" description="Helical" evidence="2">
    <location>
        <begin position="93"/>
        <end position="113"/>
    </location>
</feature>
<feature type="topological domain" description="Extracellular" evidence="2">
    <location>
        <begin position="114"/>
        <end position="121"/>
    </location>
</feature>
<feature type="transmembrane region" description="Helical" evidence="2">
    <location>
        <begin position="122"/>
        <end position="142"/>
    </location>
</feature>
<feature type="topological domain" description="Cytoplasmic" evidence="2">
    <location>
        <begin position="143"/>
        <end position="317"/>
    </location>
</feature>
<feature type="domain" description="SH3" evidence="3">
    <location>
        <begin position="258"/>
        <end position="317"/>
    </location>
</feature>
<feature type="region of interest" description="Disordered" evidence="4">
    <location>
        <begin position="216"/>
        <end position="255"/>
    </location>
</feature>
<feature type="glycosylation site" description="N-linked (GlcNAc...) asparagine" evidence="2">
    <location>
        <position position="62"/>
    </location>
</feature>
<sequence>MNGQSDYKGQRTAGMRGMSMDNILGDPFALATISIAMLAWFIAFIGSILATASHPPGDGFPNYSWFTIAYMLCCILGIFVVIASDTTQTYHVAIVGFLATGLVLTSSSVNSLIYSSNGAKEATAAGHILLSMVAIVWMFYFGSTPSAVPRAYLDSFALHKDHRVSSGRGMSTAYGNGYGHGYGNGRPDTSISSNVPPQMYTSAQLGGFETSSPVAGFPGGAAGAERNSSQPRFGASNLGPNGAMGSESTPGEVVQPTEYPYRAKAIYSYDANPDDANEISFAKHEILEVSDVSGRWWQAKKENGDTGIAPSNYLILL</sequence>
<proteinExistence type="inferred from homology"/>
<comment type="function">
    <text evidence="1">Plasma membrane osmosensor that activates the high osmolarity glycerol (HOG) MAPK signaling pathway in response to high osmolarity.</text>
</comment>
<comment type="subunit">
    <text evidence="1">Forms homooligomers.</text>
</comment>
<comment type="subcellular location">
    <subcellularLocation>
        <location evidence="1">Cell membrane</location>
        <topology evidence="1">Multi-pass membrane protein</topology>
    </subcellularLocation>
</comment>
<comment type="similarity">
    <text evidence="5">Belongs to the SHO1 family.</text>
</comment>
<gene>
    <name type="primary">sho1</name>
    <name type="ORF">SS1G_11424</name>
</gene>
<reference key="1">
    <citation type="journal article" date="2011" name="PLoS Genet.">
        <title>Genomic analysis of the necrotrophic fungal pathogens Sclerotinia sclerotiorum and Botrytis cinerea.</title>
        <authorList>
            <person name="Amselem J."/>
            <person name="Cuomo C.A."/>
            <person name="van Kan J.A.L."/>
            <person name="Viaud M."/>
            <person name="Benito E.P."/>
            <person name="Couloux A."/>
            <person name="Coutinho P.M."/>
            <person name="de Vries R.P."/>
            <person name="Dyer P.S."/>
            <person name="Fillinger S."/>
            <person name="Fournier E."/>
            <person name="Gout L."/>
            <person name="Hahn M."/>
            <person name="Kohn L."/>
            <person name="Lapalu N."/>
            <person name="Plummer K.M."/>
            <person name="Pradier J.-M."/>
            <person name="Quevillon E."/>
            <person name="Sharon A."/>
            <person name="Simon A."/>
            <person name="ten Have A."/>
            <person name="Tudzynski B."/>
            <person name="Tudzynski P."/>
            <person name="Wincker P."/>
            <person name="Andrew M."/>
            <person name="Anthouard V."/>
            <person name="Beever R.E."/>
            <person name="Beffa R."/>
            <person name="Benoit I."/>
            <person name="Bouzid O."/>
            <person name="Brault B."/>
            <person name="Chen Z."/>
            <person name="Choquer M."/>
            <person name="Collemare J."/>
            <person name="Cotton P."/>
            <person name="Danchin E.G."/>
            <person name="Da Silva C."/>
            <person name="Gautier A."/>
            <person name="Giraud C."/>
            <person name="Giraud T."/>
            <person name="Gonzalez C."/>
            <person name="Grossetete S."/>
            <person name="Gueldener U."/>
            <person name="Henrissat B."/>
            <person name="Howlett B.J."/>
            <person name="Kodira C."/>
            <person name="Kretschmer M."/>
            <person name="Lappartient A."/>
            <person name="Leroch M."/>
            <person name="Levis C."/>
            <person name="Mauceli E."/>
            <person name="Neuveglise C."/>
            <person name="Oeser B."/>
            <person name="Pearson M."/>
            <person name="Poulain J."/>
            <person name="Poussereau N."/>
            <person name="Quesneville H."/>
            <person name="Rascle C."/>
            <person name="Schumacher J."/>
            <person name="Segurens B."/>
            <person name="Sexton A."/>
            <person name="Silva E."/>
            <person name="Sirven C."/>
            <person name="Soanes D.M."/>
            <person name="Talbot N.J."/>
            <person name="Templeton M."/>
            <person name="Yandava C."/>
            <person name="Yarden O."/>
            <person name="Zeng Q."/>
            <person name="Rollins J.A."/>
            <person name="Lebrun M.-H."/>
            <person name="Dickman M."/>
        </authorList>
    </citation>
    <scope>NUCLEOTIDE SEQUENCE [LARGE SCALE GENOMIC DNA]</scope>
    <source>
        <strain>ATCC 18683 / 1980 / Ss-1</strain>
    </source>
</reference>
<name>SHO1_SCLS1</name>
<keyword id="KW-1003">Cell membrane</keyword>
<keyword id="KW-0325">Glycoprotein</keyword>
<keyword id="KW-0472">Membrane</keyword>
<keyword id="KW-1185">Reference proteome</keyword>
<keyword id="KW-0728">SH3 domain</keyword>
<keyword id="KW-0346">Stress response</keyword>
<keyword id="KW-0812">Transmembrane</keyword>
<keyword id="KW-1133">Transmembrane helix</keyword>